<comment type="function">
    <text evidence="3 5">Component of the cell wall. Major cell wall protein in stationary phase cells. Required to stabilize the cell wall in the absence of multiple GPI-anchored mannoproteins.</text>
</comment>
<comment type="subcellular location">
    <subcellularLocation>
        <location>Secreted</location>
        <location>Cell wall</location>
    </subcellularLocation>
    <subcellularLocation>
        <location>Membrane</location>
        <topology>Lipid-anchor</topology>
        <topology>GPI-anchor</topology>
    </subcellularLocation>
    <text>Covalently-linked GPI-modified cell wall protein (GPI-CWP).</text>
</comment>
<comment type="induction">
    <text evidence="7">Induced in stationary phase and under conditions of stress and starvation (at protein level).</text>
</comment>
<comment type="domain">
    <text>The number of the intragenic tandem repeats varies between different S.cerevisiae strains.</text>
</comment>
<comment type="PTM">
    <text>The N-terminus is blocked.</text>
</comment>
<comment type="PTM">
    <text>The GPI-anchor is attached to the protein in the endoplasmic reticulum and serves to target the protein to the cell surface. There, the glucosamine-inositol phospholipid moiety is cleaved off and the GPI-modified mannoprotein is covalently attached via its lipidless GPI glycan remnant to the 1,6-beta-glucan of the outer cell wall layer.</text>
</comment>
<comment type="miscellaneous">
    <text evidence="4">Present with 1630 molecules/cell in log phase SD medium.</text>
</comment>
<comment type="similarity">
    <text evidence="8">Belongs to the SED1 family.</text>
</comment>
<name>SED1_YEAST</name>
<accession>Q01589</accession>
<accession>D6VS63</accession>
<accession>Q6Q5U8</accession>
<accession>Q8J057</accession>
<accession>Q8J270</accession>
<accession>Q8J271</accession>
<accession>Q8J272</accession>
<accession>Q8J273</accession>
<accession>Q8J274</accession>
<accession>Q8J275</accession>
<evidence type="ECO:0000255" key="1"/>
<evidence type="ECO:0000256" key="2">
    <source>
        <dbReference type="SAM" id="MobiDB-lite"/>
    </source>
</evidence>
<evidence type="ECO:0000269" key="3">
    <source>
    </source>
</evidence>
<evidence type="ECO:0000269" key="4">
    <source>
    </source>
</evidence>
<evidence type="ECO:0000269" key="5">
    <source>
    </source>
</evidence>
<evidence type="ECO:0000269" key="6">
    <source>
    </source>
</evidence>
<evidence type="ECO:0000269" key="7">
    <source>
    </source>
</evidence>
<evidence type="ECO:0000305" key="8"/>
<gene>
    <name type="primary">SED1</name>
    <name type="ordered locus">YDR077W</name>
    <name type="ORF">D4431</name>
</gene>
<keyword id="KW-0134">Cell wall</keyword>
<keyword id="KW-0903">Direct protein sequencing</keyword>
<keyword id="KW-0325">Glycoprotein</keyword>
<keyword id="KW-0336">GPI-anchor</keyword>
<keyword id="KW-0449">Lipoprotein</keyword>
<keyword id="KW-0472">Membrane</keyword>
<keyword id="KW-1185">Reference proteome</keyword>
<keyword id="KW-0677">Repeat</keyword>
<keyword id="KW-0964">Secreted</keyword>
<keyword id="KW-0732">Signal</keyword>
<protein>
    <recommendedName>
        <fullName>Cell wall protein SED1</fullName>
    </recommendedName>
    <alternativeName>
        <fullName>Glycoprotein GP260</fullName>
    </alternativeName>
</protein>
<organism>
    <name type="scientific">Saccharomyces cerevisiae (strain ATCC 204508 / S288c)</name>
    <name type="common">Baker's yeast</name>
    <dbReference type="NCBI Taxonomy" id="559292"/>
    <lineage>
        <taxon>Eukaryota</taxon>
        <taxon>Fungi</taxon>
        <taxon>Dikarya</taxon>
        <taxon>Ascomycota</taxon>
        <taxon>Saccharomycotina</taxon>
        <taxon>Saccharomycetes</taxon>
        <taxon>Saccharomycetales</taxon>
        <taxon>Saccharomycetaceae</taxon>
        <taxon>Saccharomyces</taxon>
    </lineage>
</organism>
<sequence>MKLSTVLLSAGLASTTLAQFSNSTSASSTDVTSSSSISTSSGSVTITSSEAPESDNGTSTAAPTETSTEAPTTAIPTNGTSTEAPTTAIPTNGTSTEAPTDTTTEAPTTALPTNGTSTEAPTDTTTEAPTTGLPTNGTTSAFPPTTSLPPSNTTTTPPYNPSTDYTTDYTVVTEYTTYCPEPTTFTTNGKTYTVTEPTTLTITDCPCTIEKPTTTSTTEYTVVTEYTTYCPEPTTFTTNGKTYTVTEPTTLTITDCPCTIEKSEAPESSVPVTESKGTTTKETGVTTKQTTANPSLTVSTVVPVSSSASSHSVVINSNGANVVVPGALGLAGVAMLFL</sequence>
<reference key="1">
    <citation type="journal article" date="1992" name="EMBO J.">
        <title>Genes that allow yeast cells to grow in the absence of the HDEL receptor.</title>
        <authorList>
            <person name="Hardwick K.G."/>
            <person name="Boothroyd J.C."/>
            <person name="Rudner A.D."/>
            <person name="Pelham H.R.B."/>
        </authorList>
    </citation>
    <scope>NUCLEOTIDE SEQUENCE [GENOMIC DNA]</scope>
    <scope>FUNCTION</scope>
</reference>
<reference key="2">
    <citation type="journal article" date="2002" name="Appl. Environ. Microbiol.">
        <title>SED1 gene length and sequence polymorphisms in feral strains of Saccharomyces cerevisiae.</title>
        <authorList>
            <person name="Mannazzu I."/>
            <person name="Simonetti E."/>
            <person name="Marinangeli P."/>
            <person name="Guerra E."/>
            <person name="Budroni M."/>
            <person name="Thangavelu M."/>
            <person name="Clementi F."/>
        </authorList>
    </citation>
    <scope>NUCLEOTIDE SEQUENCE [GENOMIC DNA]</scope>
    <scope>VARIANTS</scope>
    <source>
        <strain>ATCC 18824 / CBS 1171 / DSM 70449 / IFO 10217 / NRRL Y-12632</strain>
    </source>
</reference>
<reference key="3">
    <citation type="journal article" date="1995" name="Yeast">
        <title>Analysis of a 32.8 kb segment of yeast chromosome IV reveals 21 open reading frames, including TPS2, PPH3, RAD55, SED1, PDC2, AFR1, SSS1, SLU7 and a tRNA for arginine.</title>
        <authorList>
            <person name="Coster F."/>
            <person name="Jonniaux J.-L."/>
            <person name="Goffeau A."/>
        </authorList>
    </citation>
    <scope>NUCLEOTIDE SEQUENCE [LARGE SCALE GENOMIC DNA]</scope>
</reference>
<reference key="4">
    <citation type="journal article" date="2014" name="G3 (Bethesda)">
        <title>The reference genome sequence of Saccharomyces cerevisiae: Then and now.</title>
        <authorList>
            <person name="Engel S.R."/>
            <person name="Dietrich F.S."/>
            <person name="Fisk D.G."/>
            <person name="Binkley G."/>
            <person name="Balakrishnan R."/>
            <person name="Costanzo M.C."/>
            <person name="Dwight S.S."/>
            <person name="Hitz B.C."/>
            <person name="Karra K."/>
            <person name="Nash R.S."/>
            <person name="Weng S."/>
            <person name="Wong E.D."/>
            <person name="Lloyd P."/>
            <person name="Skrzypek M.S."/>
            <person name="Miyasato S.R."/>
            <person name="Simison M."/>
            <person name="Cherry J.M."/>
        </authorList>
    </citation>
    <scope>GENOME REANNOTATION</scope>
    <source>
        <strain>ATCC 204508 / S288c</strain>
    </source>
</reference>
<reference key="5">
    <citation type="journal article" date="1997" name="Nature">
        <title>The nucleotide sequence of Saccharomyces cerevisiae chromosome IV.</title>
        <authorList>
            <person name="Jacq C."/>
            <person name="Alt-Moerbe J."/>
            <person name="Andre B."/>
            <person name="Arnold W."/>
            <person name="Bahr A."/>
            <person name="Ballesta J.P.G."/>
            <person name="Bargues M."/>
            <person name="Baron L."/>
            <person name="Becker A."/>
            <person name="Biteau N."/>
            <person name="Bloecker H."/>
            <person name="Blugeon C."/>
            <person name="Boskovic J."/>
            <person name="Brandt P."/>
            <person name="Brueckner M."/>
            <person name="Buitrago M.J."/>
            <person name="Coster F."/>
            <person name="Delaveau T."/>
            <person name="del Rey F."/>
            <person name="Dujon B."/>
            <person name="Eide L.G."/>
            <person name="Garcia-Cantalejo J.M."/>
            <person name="Goffeau A."/>
            <person name="Gomez-Peris A."/>
            <person name="Granotier C."/>
            <person name="Hanemann V."/>
            <person name="Hankeln T."/>
            <person name="Hoheisel J.D."/>
            <person name="Jaeger W."/>
            <person name="Jimenez A."/>
            <person name="Jonniaux J.-L."/>
            <person name="Kraemer C."/>
            <person name="Kuester H."/>
            <person name="Laamanen P."/>
            <person name="Legros Y."/>
            <person name="Louis E.J."/>
            <person name="Moeller-Rieker S."/>
            <person name="Monnet A."/>
            <person name="Moro M."/>
            <person name="Mueller-Auer S."/>
            <person name="Nussbaumer B."/>
            <person name="Paricio N."/>
            <person name="Paulin L."/>
            <person name="Perea J."/>
            <person name="Perez-Alonso M."/>
            <person name="Perez-Ortin J.E."/>
            <person name="Pohl T.M."/>
            <person name="Prydz H."/>
            <person name="Purnelle B."/>
            <person name="Rasmussen S.W."/>
            <person name="Remacha M.A."/>
            <person name="Revuelta J.L."/>
            <person name="Rieger M."/>
            <person name="Salom D."/>
            <person name="Saluz H.P."/>
            <person name="Saiz J.E."/>
            <person name="Saren A.-M."/>
            <person name="Schaefer M."/>
            <person name="Scharfe M."/>
            <person name="Schmidt E.R."/>
            <person name="Schneider C."/>
            <person name="Scholler P."/>
            <person name="Schwarz S."/>
            <person name="Soler-Mira A."/>
            <person name="Urrestarazu L.A."/>
            <person name="Verhasselt P."/>
            <person name="Vissers S."/>
            <person name="Voet M."/>
            <person name="Volckaert G."/>
            <person name="Wagner G."/>
            <person name="Wambutt R."/>
            <person name="Wedler E."/>
            <person name="Wedler H."/>
            <person name="Woelfl S."/>
            <person name="Harris D.E."/>
            <person name="Bowman S."/>
            <person name="Brown D."/>
            <person name="Churcher C.M."/>
            <person name="Connor R."/>
            <person name="Dedman K."/>
            <person name="Gentles S."/>
            <person name="Hamlin N."/>
            <person name="Hunt S."/>
            <person name="Jones L."/>
            <person name="McDonald S."/>
            <person name="Murphy L.D."/>
            <person name="Niblett D."/>
            <person name="Odell C."/>
            <person name="Oliver K."/>
            <person name="Rajandream M.A."/>
            <person name="Richards C."/>
            <person name="Shore L."/>
            <person name="Walsh S.V."/>
            <person name="Barrell B.G."/>
            <person name="Dietrich F.S."/>
            <person name="Mulligan J.T."/>
            <person name="Allen E."/>
            <person name="Araujo R."/>
            <person name="Aviles E."/>
            <person name="Berno A."/>
            <person name="Carpenter J."/>
            <person name="Chen E."/>
            <person name="Cherry J.M."/>
            <person name="Chung E."/>
            <person name="Duncan M."/>
            <person name="Hunicke-Smith S."/>
            <person name="Hyman R.W."/>
            <person name="Komp C."/>
            <person name="Lashkari D."/>
            <person name="Lew H."/>
            <person name="Lin D."/>
            <person name="Mosedale D."/>
            <person name="Nakahara K."/>
            <person name="Namath A."/>
            <person name="Oefner P."/>
            <person name="Oh C."/>
            <person name="Petel F.X."/>
            <person name="Roberts D."/>
            <person name="Schramm S."/>
            <person name="Schroeder M."/>
            <person name="Shogren T."/>
            <person name="Shroff N."/>
            <person name="Winant A."/>
            <person name="Yelton M.A."/>
            <person name="Botstein D."/>
            <person name="Davis R.W."/>
            <person name="Johnston M."/>
            <person name="Andrews S."/>
            <person name="Brinkman R."/>
            <person name="Cooper J."/>
            <person name="Ding H."/>
            <person name="Du Z."/>
            <person name="Favello A."/>
            <person name="Fulton L."/>
            <person name="Gattung S."/>
            <person name="Greco T."/>
            <person name="Hallsworth K."/>
            <person name="Hawkins J."/>
            <person name="Hillier L.W."/>
            <person name="Jier M."/>
            <person name="Johnson D."/>
            <person name="Johnston L."/>
            <person name="Kirsten J."/>
            <person name="Kucaba T."/>
            <person name="Langston Y."/>
            <person name="Latreille P."/>
            <person name="Le T."/>
            <person name="Mardis E."/>
            <person name="Menezes S."/>
            <person name="Miller N."/>
            <person name="Nhan M."/>
            <person name="Pauley A."/>
            <person name="Peluso D."/>
            <person name="Rifkin L."/>
            <person name="Riles L."/>
            <person name="Taich A."/>
            <person name="Trevaskis E."/>
            <person name="Vignati D."/>
            <person name="Wilcox L."/>
            <person name="Wohldman P."/>
            <person name="Vaudin M."/>
            <person name="Wilson R."/>
            <person name="Waterston R."/>
            <person name="Albermann K."/>
            <person name="Hani J."/>
            <person name="Heumann K."/>
            <person name="Kleine K."/>
            <person name="Mewes H.-W."/>
            <person name="Zollner A."/>
            <person name="Zaccaria P."/>
        </authorList>
    </citation>
    <scope>NUCLEOTIDE SEQUENCE [LARGE SCALE GENOMIC DNA]</scope>
    <source>
        <strain>ATCC 204508 / S288c</strain>
    </source>
</reference>
<reference key="6">
    <citation type="journal article" date="2007" name="Genome Res.">
        <title>Approaching a complete repository of sequence-verified protein-encoding clones for Saccharomyces cerevisiae.</title>
        <authorList>
            <person name="Hu Y."/>
            <person name="Rolfs A."/>
            <person name="Bhullar B."/>
            <person name="Murthy T.V.S."/>
            <person name="Zhu C."/>
            <person name="Berger M.F."/>
            <person name="Camargo A.A."/>
            <person name="Kelley F."/>
            <person name="McCarron S."/>
            <person name="Jepson D."/>
            <person name="Richardson A."/>
            <person name="Raphael J."/>
            <person name="Moreira D."/>
            <person name="Taycher E."/>
            <person name="Zuo D."/>
            <person name="Mohr S."/>
            <person name="Kane M.F."/>
            <person name="Williamson J."/>
            <person name="Simpson A.J.G."/>
            <person name="Bulyk M.L."/>
            <person name="Harlow E."/>
            <person name="Marsischky G."/>
            <person name="Kolodner R.D."/>
            <person name="LaBaer J."/>
        </authorList>
    </citation>
    <scope>NUCLEOTIDE SEQUENCE [GENOMIC DNA]</scope>
    <source>
        <strain>ATCC 204508 / S288c</strain>
    </source>
</reference>
<reference key="7">
    <citation type="journal article" date="1998" name="J. Bacteriol.">
        <title>Sed1p is a major cell wall protein of Saccharomyces cerevisiae in the stationary phase and is involved in lytic enzyme resistance.</title>
        <authorList>
            <person name="Shimoi H."/>
            <person name="Kitagaki H."/>
            <person name="Ohmori H."/>
            <person name="Iimura Y."/>
            <person name="Ito K."/>
        </authorList>
    </citation>
    <scope>PROTEIN SEQUENCE OF 20-32</scope>
    <scope>PROTEIN SEQUENCE OF 243-276 AND 292-301</scope>
    <scope>SUBCELLULAR LOCATION</scope>
    <scope>INDUCTION</scope>
</reference>
<reference key="8">
    <citation type="journal article" date="1996" name="Biochim. Biophys. Acta">
        <title>The retention mechanism of cell wall proteins in Saccharomyces cerevisiae. Wall-bound Cwp2p is beta-1,6-glucosylated.</title>
        <authorList>
            <person name="van der Vaart J.M."/>
            <person name="van Schagen F.S."/>
            <person name="Mooren A.T.A."/>
            <person name="Chapman J.W."/>
            <person name="Klis F.M."/>
            <person name="Verrips C.T."/>
        </authorList>
    </citation>
    <scope>SUBCELLULAR LOCATION</scope>
</reference>
<reference key="9">
    <citation type="journal article" date="1997" name="Appl. Environ. Microbiol.">
        <title>Comparison of cell wall proteins of Saccharomyces cerevisiae as anchors for cell surface expression of heterologous proteins.</title>
        <authorList>
            <person name="Van der Vaart J.M."/>
            <person name="te Biesebeke R."/>
            <person name="Chapman J.W."/>
            <person name="Toschka H.Y."/>
            <person name="Klis F.M."/>
            <person name="Verrips C.T."/>
        </authorList>
    </citation>
    <scope>SUBCELLULAR LOCATION</scope>
</reference>
<reference key="10">
    <citation type="journal article" date="2003" name="Nature">
        <title>Global analysis of protein expression in yeast.</title>
        <authorList>
            <person name="Ghaemmaghami S."/>
            <person name="Huh W.-K."/>
            <person name="Bower K."/>
            <person name="Howson R.W."/>
            <person name="Belle A."/>
            <person name="Dephoure N."/>
            <person name="O'Shea E.K."/>
            <person name="Weissman J.S."/>
        </authorList>
    </citation>
    <scope>LEVEL OF PROTEIN EXPRESSION [LARGE SCALE ANALYSIS]</scope>
</reference>
<reference key="11">
    <citation type="journal article" date="2004" name="FEMS Yeast Res.">
        <title>Incorporation of Sed1p into the cell wall of Saccharomyces cerevisiae involves KRE6.</title>
        <authorList>
            <person name="Bowen S."/>
            <person name="Wheals A.E."/>
        </authorList>
    </citation>
    <scope>SUBCELLULAR LOCATION</scope>
</reference>
<reference key="12">
    <citation type="journal article" date="2004" name="Mol. Microbiol.">
        <title>Sed1p and Srl1p are required to compensate for cell wall instability in Saccharomyces cerevisiae mutants defective in multiple GPI-anchored mannoproteins.</title>
        <authorList>
            <person name="Hagen I."/>
            <person name="Ecker M."/>
            <person name="Lagorce A."/>
            <person name="Francois J.M."/>
            <person name="Sestak S."/>
            <person name="Rachel R."/>
            <person name="Grossmann G."/>
            <person name="Hauser N.C."/>
            <person name="Hoheisel J.D."/>
            <person name="Tanner W."/>
            <person name="Strahl S."/>
        </authorList>
    </citation>
    <scope>FUNCTION</scope>
    <scope>SUBCELLULAR LOCATION</scope>
</reference>
<reference key="13">
    <citation type="journal article" date="2005" name="Nat. Genet.">
        <title>Intragenic tandem repeats generate functional variability.</title>
        <authorList>
            <person name="Verstrepen K.J."/>
            <person name="Jansen A."/>
            <person name="Lewitter F."/>
            <person name="Fink G.R."/>
        </authorList>
    </citation>
    <scope>REPEATS</scope>
</reference>
<dbReference type="EMBL" id="X66838">
    <property type="protein sequence ID" value="CAA47314.1"/>
    <property type="molecule type" value="Genomic_DNA"/>
</dbReference>
<dbReference type="EMBL" id="AF510219">
    <property type="protein sequence ID" value="AAN62891.1"/>
    <property type="molecule type" value="Genomic_DNA"/>
</dbReference>
<dbReference type="EMBL" id="AF510220">
    <property type="protein sequence ID" value="AAN62892.1"/>
    <property type="molecule type" value="Genomic_DNA"/>
</dbReference>
<dbReference type="EMBL" id="AF510221">
    <property type="protein sequence ID" value="AAN62893.1"/>
    <property type="molecule type" value="Genomic_DNA"/>
</dbReference>
<dbReference type="EMBL" id="AF510222">
    <property type="protein sequence ID" value="AAN62894.1"/>
    <property type="molecule type" value="Genomic_DNA"/>
</dbReference>
<dbReference type="EMBL" id="AF510223">
    <property type="protein sequence ID" value="AAN62895.1"/>
    <property type="molecule type" value="Genomic_DNA"/>
</dbReference>
<dbReference type="EMBL" id="AF510224">
    <property type="protein sequence ID" value="AAN62896.1"/>
    <property type="molecule type" value="Genomic_DNA"/>
</dbReference>
<dbReference type="EMBL" id="AF510225">
    <property type="protein sequence ID" value="AAN62897.1"/>
    <property type="molecule type" value="Genomic_DNA"/>
</dbReference>
<dbReference type="EMBL" id="AF510226">
    <property type="protein sequence ID" value="AAN62898.1"/>
    <property type="molecule type" value="Genomic_DNA"/>
</dbReference>
<dbReference type="EMBL" id="X82086">
    <property type="protein sequence ID" value="CAA57604.1"/>
    <property type="molecule type" value="Genomic_DNA"/>
</dbReference>
<dbReference type="EMBL" id="Z46796">
    <property type="protein sequence ID" value="CAA86799.1"/>
    <property type="molecule type" value="Genomic_DNA"/>
</dbReference>
<dbReference type="EMBL" id="Z74373">
    <property type="protein sequence ID" value="CAA98896.1"/>
    <property type="molecule type" value="Genomic_DNA"/>
</dbReference>
<dbReference type="EMBL" id="AY557693">
    <property type="protein sequence ID" value="AAS56019.1"/>
    <property type="molecule type" value="Genomic_DNA"/>
</dbReference>
<dbReference type="EMBL" id="BK006938">
    <property type="protein sequence ID" value="DAA11923.1"/>
    <property type="molecule type" value="Genomic_DNA"/>
</dbReference>
<dbReference type="PIR" id="S28004">
    <property type="entry name" value="S28004"/>
</dbReference>
<dbReference type="RefSeq" id="NP_010362.3">
    <property type="nucleotide sequence ID" value="NM_001180385.3"/>
</dbReference>
<dbReference type="BioGRID" id="32132">
    <property type="interactions" value="112"/>
</dbReference>
<dbReference type="DIP" id="DIP-1613N"/>
<dbReference type="FunCoup" id="Q01589">
    <property type="interactions" value="117"/>
</dbReference>
<dbReference type="IntAct" id="Q01589">
    <property type="interactions" value="5"/>
</dbReference>
<dbReference type="MINT" id="Q01589"/>
<dbReference type="STRING" id="4932.YDR077W"/>
<dbReference type="GlyCosmos" id="Q01589">
    <property type="glycosylation" value="7 sites, No reported glycans"/>
</dbReference>
<dbReference type="GlyGen" id="Q01589">
    <property type="glycosylation" value="7 sites"/>
</dbReference>
<dbReference type="iPTMnet" id="Q01589"/>
<dbReference type="PaxDb" id="4932-YDR077W"/>
<dbReference type="PeptideAtlas" id="Q01589"/>
<dbReference type="EnsemblFungi" id="YDR077W_mRNA">
    <property type="protein sequence ID" value="YDR077W"/>
    <property type="gene ID" value="YDR077W"/>
</dbReference>
<dbReference type="GeneID" id="851649"/>
<dbReference type="KEGG" id="sce:YDR077W"/>
<dbReference type="AGR" id="SGD:S000002484"/>
<dbReference type="SGD" id="S000002484">
    <property type="gene designation" value="SED1"/>
</dbReference>
<dbReference type="VEuPathDB" id="FungiDB:YDR077W"/>
<dbReference type="eggNOG" id="ENOG502S7XK">
    <property type="taxonomic scope" value="Eukaryota"/>
</dbReference>
<dbReference type="HOGENOM" id="CLU_054260_0_0_1"/>
<dbReference type="InParanoid" id="Q01589"/>
<dbReference type="OMA" id="YCISCSC"/>
<dbReference type="OrthoDB" id="4094614at2759"/>
<dbReference type="BioCyc" id="YEAST:G3O-29682-MONOMER"/>
<dbReference type="BioGRID-ORCS" id="851649">
    <property type="hits" value="1 hit in 10 CRISPR screens"/>
</dbReference>
<dbReference type="PRO" id="PR:Q01589"/>
<dbReference type="Proteomes" id="UP000002311">
    <property type="component" value="Chromosome IV"/>
</dbReference>
<dbReference type="RNAct" id="Q01589">
    <property type="molecule type" value="protein"/>
</dbReference>
<dbReference type="GO" id="GO:0071944">
    <property type="term" value="C:cell periphery"/>
    <property type="evidence" value="ECO:0007005"/>
    <property type="project" value="SGD"/>
</dbReference>
<dbReference type="GO" id="GO:0005576">
    <property type="term" value="C:extracellular region"/>
    <property type="evidence" value="ECO:0007669"/>
    <property type="project" value="UniProtKB-KW"/>
</dbReference>
<dbReference type="GO" id="GO:0009277">
    <property type="term" value="C:fungal-type cell wall"/>
    <property type="evidence" value="ECO:0000314"/>
    <property type="project" value="SGD"/>
</dbReference>
<dbReference type="GO" id="GO:0005739">
    <property type="term" value="C:mitochondrion"/>
    <property type="evidence" value="ECO:0000314"/>
    <property type="project" value="SGD"/>
</dbReference>
<dbReference type="GO" id="GO:0005840">
    <property type="term" value="C:ribosome"/>
    <property type="evidence" value="ECO:0000314"/>
    <property type="project" value="SGD"/>
</dbReference>
<dbReference type="GO" id="GO:0098552">
    <property type="term" value="C:side of membrane"/>
    <property type="evidence" value="ECO:0007669"/>
    <property type="project" value="UniProtKB-KW"/>
</dbReference>
<dbReference type="GO" id="GO:0005199">
    <property type="term" value="F:structural constituent of cell wall"/>
    <property type="evidence" value="ECO:0000315"/>
    <property type="project" value="SGD"/>
</dbReference>
<dbReference type="GO" id="GO:0031505">
    <property type="term" value="P:fungal-type cell wall organization"/>
    <property type="evidence" value="ECO:0000315"/>
    <property type="project" value="SGD"/>
</dbReference>
<dbReference type="GO" id="GO:0000002">
    <property type="term" value="P:mitochondrial genome maintenance"/>
    <property type="evidence" value="ECO:0000315"/>
    <property type="project" value="SGD"/>
</dbReference>
<dbReference type="InterPro" id="IPR038843">
    <property type="entry name" value="Sed1/Spi1"/>
</dbReference>
<dbReference type="PANTHER" id="PTHR35523">
    <property type="entry name" value="CELL WALL PROTEIN SED1"/>
    <property type="match status" value="1"/>
</dbReference>
<dbReference type="PANTHER" id="PTHR35523:SF1">
    <property type="entry name" value="CELL WALL PROTEIN SED1"/>
    <property type="match status" value="1"/>
</dbReference>
<feature type="signal peptide">
    <location>
        <begin position="1"/>
        <end position="18"/>
    </location>
</feature>
<feature type="chain" id="PRO_0000022292" description="Cell wall protein SED1">
    <location>
        <begin position="19"/>
        <end position="318"/>
    </location>
</feature>
<feature type="propeptide" id="PRO_0000022293" description="Removed in mature form" evidence="1">
    <location>
        <begin position="319"/>
        <end position="338"/>
    </location>
</feature>
<feature type="repeat" description="1-1" evidence="6">
    <location>
        <begin position="58"/>
        <end position="65"/>
    </location>
</feature>
<feature type="repeat" description="1-2" evidence="6">
    <location>
        <begin position="66"/>
        <end position="79"/>
    </location>
</feature>
<feature type="repeat" description="1-3" evidence="6">
    <location>
        <begin position="80"/>
        <end position="93"/>
    </location>
</feature>
<feature type="repeat" description="1-4" evidence="6">
    <location>
        <begin position="94"/>
        <end position="101"/>
    </location>
</feature>
<feature type="repeat" description="1-5" evidence="6">
    <location>
        <begin position="102"/>
        <end position="115"/>
    </location>
</feature>
<feature type="repeat" description="1-6" evidence="6">
    <location>
        <begin position="116"/>
        <end position="123"/>
    </location>
</feature>
<feature type="repeat" description="1-7" evidence="6">
    <location>
        <begin position="124"/>
        <end position="137"/>
    </location>
</feature>
<feature type="repeat" description="2-1" evidence="6">
    <location>
        <begin position="169"/>
        <end position="211"/>
    </location>
</feature>
<feature type="repeat" description="2-2" evidence="6">
    <location>
        <begin position="220"/>
        <end position="262"/>
    </location>
</feature>
<feature type="region of interest" description="Disordered" evidence="2">
    <location>
        <begin position="20"/>
        <end position="165"/>
    </location>
</feature>
<feature type="region of interest" description="7 X approximate tandem repeats">
    <location>
        <begin position="58"/>
        <end position="137"/>
    </location>
</feature>
<feature type="region of interest" description="2 X 43 AA repeats">
    <location>
        <begin position="169"/>
        <end position="262"/>
    </location>
</feature>
<feature type="region of interest" description="Disordered" evidence="2">
    <location>
        <begin position="264"/>
        <end position="289"/>
    </location>
</feature>
<feature type="compositionally biased region" description="Low complexity" evidence="2">
    <location>
        <begin position="20"/>
        <end position="49"/>
    </location>
</feature>
<feature type="compositionally biased region" description="Low complexity" evidence="2">
    <location>
        <begin position="58"/>
        <end position="74"/>
    </location>
</feature>
<feature type="compositionally biased region" description="Polar residues" evidence="2">
    <location>
        <begin position="75"/>
        <end position="93"/>
    </location>
</feature>
<feature type="compositionally biased region" description="Low complexity" evidence="2">
    <location>
        <begin position="94"/>
        <end position="135"/>
    </location>
</feature>
<feature type="compositionally biased region" description="Low complexity" evidence="2">
    <location>
        <begin position="143"/>
        <end position="165"/>
    </location>
</feature>
<feature type="compositionally biased region" description="Low complexity" evidence="2">
    <location>
        <begin position="272"/>
        <end position="289"/>
    </location>
</feature>
<feature type="lipid moiety-binding region" description="GPI-anchor amidated asparagine" evidence="1">
    <location>
        <position position="318"/>
    </location>
</feature>
<feature type="glycosylation site" description="N-linked (GlcNAc...) asparagine" evidence="1">
    <location>
        <position position="22"/>
    </location>
</feature>
<feature type="glycosylation site" description="N-linked (GlcNAc...) asparagine" evidence="1">
    <location>
        <position position="56"/>
    </location>
</feature>
<feature type="glycosylation site" description="N-linked (GlcNAc...) asparagine" evidence="1">
    <location>
        <position position="78"/>
    </location>
</feature>
<feature type="glycosylation site" description="N-linked (GlcNAc...) asparagine" evidence="1">
    <location>
        <position position="92"/>
    </location>
</feature>
<feature type="glycosylation site" description="N-linked (GlcNAc...) asparagine" evidence="1">
    <location>
        <position position="114"/>
    </location>
</feature>
<feature type="glycosylation site" description="N-linked (GlcNAc...) asparagine" evidence="1">
    <location>
        <position position="136"/>
    </location>
</feature>
<feature type="glycosylation site" description="N-linked (GlcNAc...) asparagine" evidence="1">
    <location>
        <position position="152"/>
    </location>
</feature>
<feature type="sequence variant" description="In strain: CBS 1171 and in allele SED1-1, SED1-2, SED1-3, SED1-4, SED1-5, SED1-6 and SED1-7.">
    <location>
        <begin position="80"/>
        <end position="93"/>
    </location>
</feature>
<feature type="sequence variant" description="In allele SED1-2.">
    <original>T</original>
    <variation>TSTEAPTTDTTSEAPTTAIPTNG</variation>
    <location>
        <position position="94"/>
    </location>
</feature>
<feature type="sequence variant" description="In allele SED1-5.">
    <original>T</original>
    <variation>TSTEAPTTDTTTEAPTTAIPTNG</variation>
    <location>
        <position position="94"/>
    </location>
</feature>
<feature type="sequence variant" description="In allele SED1-3 and SED1-6.">
    <original>T</original>
    <variation>TSTEAPTTDTTTEAPTTALPTNGTSTEAPTDTTTEAPTTALPTNG</variation>
    <location>
        <position position="94"/>
    </location>
</feature>
<feature type="sequence variant" description="In allele SED1-4, SED1-5 and SED1-6.">
    <original>P</original>
    <variation>PTTTSTTEYTVVTEYTTYCPEPTTFTTNGKTYTVTEPTTLTITDCPCTIEK</variation>
    <location>
        <position position="212"/>
    </location>
</feature>
<feature type="sequence variant" description="In allele SED1-7.">
    <original>P</original>
    <variation>PTTTSTTEYTVVTEYTTYCPEPTTFTTNGKTYTVTEPTTLTITDCPCTIEKPTTTSTTEYTVVTEYTTYCPEPTTFTTNGKTYTVTEPTTLTITDCPCTIEK</variation>
    <location>
        <position position="212"/>
    </location>
</feature>
<feature type="sequence conflict" description="In Ref. 6; AAS56019." evidence="8" ref="6">
    <original>S</original>
    <variation>P</variation>
    <location>
        <position position="309"/>
    </location>
</feature>
<proteinExistence type="evidence at protein level"/>